<comment type="function">
    <text evidence="2">Component of the ubiquinol-cytochrome c reductase complex (complex III or cytochrome b-c1 complex) that is part of the mitochondrial respiratory chain. The b-c1 complex mediates electron transfer from ubiquinol to cytochrome c. Contributes to the generation of a proton gradient across the mitochondrial membrane that is then used for ATP synthesis.</text>
</comment>
<comment type="cofactor">
    <cofactor evidence="2">
        <name>heme b</name>
        <dbReference type="ChEBI" id="CHEBI:60344"/>
    </cofactor>
    <text evidence="2">Binds 2 heme b groups non-covalently.</text>
</comment>
<comment type="subunit">
    <text evidence="2">The cytochrome bc1 complex contains 11 subunits: 3 respiratory subunits (MT-CYB, CYC1 and UQCRFS1), 2 core proteins (UQCRC1 and UQCRC2) and 6 low-molecular weight proteins (UQCRH/QCR6, UQCRB/QCR7, UQCRQ/QCR8, UQCR10/QCR9, UQCR11/QCR10 and a cleavage product of UQCRFS1). This cytochrome bc1 complex then forms a dimer.</text>
</comment>
<comment type="subcellular location">
    <subcellularLocation>
        <location evidence="2">Mitochondrion inner membrane</location>
        <topology evidence="2">Multi-pass membrane protein</topology>
    </subcellularLocation>
</comment>
<comment type="miscellaneous">
    <text evidence="1">Heme 1 (or BL or b562) is low-potential and absorbs at about 562 nm, and heme 2 (or BH or b566) is high-potential and absorbs at about 566 nm.</text>
</comment>
<comment type="similarity">
    <text evidence="3">Belongs to the cytochrome b family.</text>
</comment>
<comment type="caution">
    <text evidence="2">The full-length protein contains only eight transmembrane helices, not nine as predicted by bioinformatics tools.</text>
</comment>
<proteinExistence type="inferred from homology"/>
<protein>
    <recommendedName>
        <fullName>Cytochrome b</fullName>
    </recommendedName>
    <alternativeName>
        <fullName>Complex III subunit 3</fullName>
    </alternativeName>
    <alternativeName>
        <fullName>Complex III subunit III</fullName>
    </alternativeName>
    <alternativeName>
        <fullName>Cytochrome b-c1 complex subunit 3</fullName>
    </alternativeName>
    <alternativeName>
        <fullName>Ubiquinol-cytochrome-c reductase complex cytochrome b subunit</fullName>
    </alternativeName>
</protein>
<name>CYB_PROCE</name>
<dbReference type="EMBL" id="L19732">
    <property type="protein sequence ID" value="AAA17778.1"/>
    <property type="molecule type" value="Genomic_DNA"/>
</dbReference>
<dbReference type="SMR" id="Q36659"/>
<dbReference type="GO" id="GO:0005743">
    <property type="term" value="C:mitochondrial inner membrane"/>
    <property type="evidence" value="ECO:0007669"/>
    <property type="project" value="UniProtKB-SubCell"/>
</dbReference>
<dbReference type="GO" id="GO:0046872">
    <property type="term" value="F:metal ion binding"/>
    <property type="evidence" value="ECO:0007669"/>
    <property type="project" value="UniProtKB-KW"/>
</dbReference>
<dbReference type="GO" id="GO:0008121">
    <property type="term" value="F:ubiquinol-cytochrome-c reductase activity"/>
    <property type="evidence" value="ECO:0007669"/>
    <property type="project" value="TreeGrafter"/>
</dbReference>
<dbReference type="GO" id="GO:0006122">
    <property type="term" value="P:mitochondrial electron transport, ubiquinol to cytochrome c"/>
    <property type="evidence" value="ECO:0007669"/>
    <property type="project" value="TreeGrafter"/>
</dbReference>
<dbReference type="CDD" id="cd00284">
    <property type="entry name" value="Cytochrome_b_N"/>
    <property type="match status" value="1"/>
</dbReference>
<dbReference type="Gene3D" id="1.20.810.10">
    <property type="entry name" value="Cytochrome Bc1 Complex, Chain C"/>
    <property type="match status" value="1"/>
</dbReference>
<dbReference type="InterPro" id="IPR005797">
    <property type="entry name" value="Cyt_b/b6_N"/>
</dbReference>
<dbReference type="InterPro" id="IPR027387">
    <property type="entry name" value="Cytb/b6-like_sf"/>
</dbReference>
<dbReference type="InterPro" id="IPR048259">
    <property type="entry name" value="Cytochrome_b_N_euk/bac"/>
</dbReference>
<dbReference type="InterPro" id="IPR016174">
    <property type="entry name" value="Di-haem_cyt_TM"/>
</dbReference>
<dbReference type="PANTHER" id="PTHR19271">
    <property type="entry name" value="CYTOCHROME B"/>
    <property type="match status" value="1"/>
</dbReference>
<dbReference type="PANTHER" id="PTHR19271:SF16">
    <property type="entry name" value="CYTOCHROME B"/>
    <property type="match status" value="1"/>
</dbReference>
<dbReference type="Pfam" id="PF00033">
    <property type="entry name" value="Cytochrome_B"/>
    <property type="match status" value="1"/>
</dbReference>
<dbReference type="SUPFAM" id="SSF81342">
    <property type="entry name" value="Transmembrane di-heme cytochromes"/>
    <property type="match status" value="1"/>
</dbReference>
<dbReference type="PROSITE" id="PS51002">
    <property type="entry name" value="CYTB_NTER"/>
    <property type="match status" value="1"/>
</dbReference>
<reference key="1">
    <citation type="journal article" date="1994" name="J. Mammal.">
        <title>Familial affinity of Tomopeas ravus (Chiroptera) based on protein electrophoretic and cytochrome b sequence data.</title>
        <authorList>
            <person name="Sudman P.D."/>
            <person name="Barkley L.J."/>
            <person name="Hafner M.S."/>
        </authorList>
    </citation>
    <scope>NUCLEOTIDE SEQUENCE [GENOMIC DNA]</scope>
    <source>
        <strain>Isolate LSUMZ 27210</strain>
        <tissue>Kidney</tissue>
        <tissue>Liver</tissue>
    </source>
</reference>
<evidence type="ECO:0000250" key="1"/>
<evidence type="ECO:0000250" key="2">
    <source>
        <dbReference type="UniProtKB" id="P00157"/>
    </source>
</evidence>
<evidence type="ECO:0000255" key="3">
    <source>
        <dbReference type="PROSITE-ProRule" id="PRU00968"/>
    </source>
</evidence>
<gene>
    <name type="primary">MT-CYB</name>
    <name type="synonym">COB</name>
    <name type="synonym">CYTB</name>
    <name type="synonym">MTCYB</name>
</gene>
<organism>
    <name type="scientific">Promops centralis</name>
    <name type="common">Big crested mastiff bat</name>
    <dbReference type="NCBI Taxonomy" id="27629"/>
    <lineage>
        <taxon>Eukaryota</taxon>
        <taxon>Metazoa</taxon>
        <taxon>Chordata</taxon>
        <taxon>Craniata</taxon>
        <taxon>Vertebrata</taxon>
        <taxon>Euteleostomi</taxon>
        <taxon>Mammalia</taxon>
        <taxon>Eutheria</taxon>
        <taxon>Laurasiatheria</taxon>
        <taxon>Chiroptera</taxon>
        <taxon>Yangochiroptera</taxon>
        <taxon>Molossidae</taxon>
        <taxon>Promops</taxon>
    </lineage>
</organism>
<geneLocation type="mitochondrion"/>
<feature type="chain" id="PRO_0000061436" description="Cytochrome b">
    <location>
        <begin position="1"/>
        <end position="176" status="greater than"/>
    </location>
</feature>
<feature type="transmembrane region" description="Helical" evidence="2">
    <location>
        <begin position="33"/>
        <end position="53"/>
    </location>
</feature>
<feature type="transmembrane region" description="Helical" evidence="2">
    <location>
        <begin position="77"/>
        <end position="98"/>
    </location>
</feature>
<feature type="transmembrane region" description="Helical" evidence="2">
    <location>
        <begin position="113"/>
        <end position="133"/>
    </location>
</feature>
<feature type="binding site" description="axial binding residue" evidence="2">
    <location>
        <position position="83"/>
    </location>
    <ligand>
        <name>heme b</name>
        <dbReference type="ChEBI" id="CHEBI:60344"/>
        <label>b562</label>
    </ligand>
    <ligandPart>
        <name>Fe</name>
        <dbReference type="ChEBI" id="CHEBI:18248"/>
    </ligandPart>
</feature>
<feature type="binding site" description="axial binding residue" evidence="2">
    <location>
        <position position="97"/>
    </location>
    <ligand>
        <name>heme b</name>
        <dbReference type="ChEBI" id="CHEBI:60344"/>
        <label>b566</label>
    </ligand>
    <ligandPart>
        <name>Fe</name>
        <dbReference type="ChEBI" id="CHEBI:18248"/>
    </ligandPart>
</feature>
<feature type="non-terminal residue">
    <location>
        <position position="176"/>
    </location>
</feature>
<sequence>MTNIRKSHPLMKIVNDAFIDLPAPSNISWWWNFGSLLGVCLMMQILTGLFLAMHYTSDTATAFNSVTHICRDVNYGWLLRYLHANGASMFFICLYLHIGRGLYYGSYTYTETWNVGIILLFAVMATAFMGYVLPWGQMSSWGATVITNLLSAIPYIGTDLVGWIWGGFSVDKATLT</sequence>
<keyword id="KW-0249">Electron transport</keyword>
<keyword id="KW-0349">Heme</keyword>
<keyword id="KW-0408">Iron</keyword>
<keyword id="KW-0472">Membrane</keyword>
<keyword id="KW-0479">Metal-binding</keyword>
<keyword id="KW-0496">Mitochondrion</keyword>
<keyword id="KW-0999">Mitochondrion inner membrane</keyword>
<keyword id="KW-0679">Respiratory chain</keyword>
<keyword id="KW-0812">Transmembrane</keyword>
<keyword id="KW-1133">Transmembrane helix</keyword>
<keyword id="KW-0813">Transport</keyword>
<keyword id="KW-0830">Ubiquinone</keyword>
<accession>Q36659</accession>